<proteinExistence type="inferred from homology"/>
<dbReference type="EC" id="4.1.3.39" evidence="1"/>
<dbReference type="EMBL" id="AP011115">
    <property type="protein sequence ID" value="BAH52697.1"/>
    <property type="molecule type" value="Genomic_DNA"/>
</dbReference>
<dbReference type="RefSeq" id="WP_012691621.1">
    <property type="nucleotide sequence ID" value="NC_012522.1"/>
</dbReference>
<dbReference type="SMR" id="C1BAJ4"/>
<dbReference type="STRING" id="632772.ROP_44500"/>
<dbReference type="KEGG" id="rop:ROP_44500"/>
<dbReference type="PATRIC" id="fig|632772.20.peg.4657"/>
<dbReference type="HOGENOM" id="CLU_049173_0_0_11"/>
<dbReference type="Proteomes" id="UP000002212">
    <property type="component" value="Chromosome"/>
</dbReference>
<dbReference type="GO" id="GO:0003852">
    <property type="term" value="F:2-isopropylmalate synthase activity"/>
    <property type="evidence" value="ECO:0007669"/>
    <property type="project" value="TreeGrafter"/>
</dbReference>
<dbReference type="GO" id="GO:0008701">
    <property type="term" value="F:4-hydroxy-2-oxovalerate aldolase activity"/>
    <property type="evidence" value="ECO:0007669"/>
    <property type="project" value="UniProtKB-UniRule"/>
</dbReference>
<dbReference type="GO" id="GO:0030145">
    <property type="term" value="F:manganese ion binding"/>
    <property type="evidence" value="ECO:0007669"/>
    <property type="project" value="UniProtKB-UniRule"/>
</dbReference>
<dbReference type="GO" id="GO:0009056">
    <property type="term" value="P:catabolic process"/>
    <property type="evidence" value="ECO:0007669"/>
    <property type="project" value="UniProtKB-KW"/>
</dbReference>
<dbReference type="GO" id="GO:0009098">
    <property type="term" value="P:L-leucine biosynthetic process"/>
    <property type="evidence" value="ECO:0007669"/>
    <property type="project" value="TreeGrafter"/>
</dbReference>
<dbReference type="CDD" id="cd07943">
    <property type="entry name" value="DRE_TIM_HOA"/>
    <property type="match status" value="1"/>
</dbReference>
<dbReference type="Gene3D" id="1.10.8.60">
    <property type="match status" value="1"/>
</dbReference>
<dbReference type="Gene3D" id="3.20.20.70">
    <property type="entry name" value="Aldolase class I"/>
    <property type="match status" value="1"/>
</dbReference>
<dbReference type="HAMAP" id="MF_01656">
    <property type="entry name" value="HOA"/>
    <property type="match status" value="1"/>
</dbReference>
<dbReference type="InterPro" id="IPR050073">
    <property type="entry name" value="2-IPM_HCS-like"/>
</dbReference>
<dbReference type="InterPro" id="IPR017629">
    <property type="entry name" value="4OH_2_O-val_aldolase"/>
</dbReference>
<dbReference type="InterPro" id="IPR013785">
    <property type="entry name" value="Aldolase_TIM"/>
</dbReference>
<dbReference type="InterPro" id="IPR012425">
    <property type="entry name" value="DmpG_comm"/>
</dbReference>
<dbReference type="InterPro" id="IPR035685">
    <property type="entry name" value="DRE_TIM_HOA"/>
</dbReference>
<dbReference type="InterPro" id="IPR000891">
    <property type="entry name" value="PYR_CT"/>
</dbReference>
<dbReference type="NCBIfam" id="TIGR03217">
    <property type="entry name" value="4OH_2_O_val_ald"/>
    <property type="match status" value="1"/>
</dbReference>
<dbReference type="NCBIfam" id="NF006049">
    <property type="entry name" value="PRK08195.1"/>
    <property type="match status" value="1"/>
</dbReference>
<dbReference type="PANTHER" id="PTHR10277:SF9">
    <property type="entry name" value="2-ISOPROPYLMALATE SYNTHASE 1, CHLOROPLASTIC-RELATED"/>
    <property type="match status" value="1"/>
</dbReference>
<dbReference type="PANTHER" id="PTHR10277">
    <property type="entry name" value="HOMOCITRATE SYNTHASE-RELATED"/>
    <property type="match status" value="1"/>
</dbReference>
<dbReference type="Pfam" id="PF07836">
    <property type="entry name" value="DmpG_comm"/>
    <property type="match status" value="1"/>
</dbReference>
<dbReference type="Pfam" id="PF00682">
    <property type="entry name" value="HMGL-like"/>
    <property type="match status" value="1"/>
</dbReference>
<dbReference type="SUPFAM" id="SSF51569">
    <property type="entry name" value="Aldolase"/>
    <property type="match status" value="1"/>
</dbReference>
<dbReference type="SUPFAM" id="SSF89000">
    <property type="entry name" value="post-HMGL domain-like"/>
    <property type="match status" value="1"/>
</dbReference>
<dbReference type="PROSITE" id="PS50991">
    <property type="entry name" value="PYR_CT"/>
    <property type="match status" value="1"/>
</dbReference>
<sequence>MSSSWDIRVTDTSLRDGSHHKRHQFTGDEVRAIVGALDSAGVPVIEVTHGDGLGGSSFNYGFSKVPEQELISIAVDTARNAKIAFLMLPGLGIKDDIIVAQDNGASICRIATHCTEADVSIQHFGLARDRGLETVGFLMMAHSIPPEKLARQARIMADAGCQCVYVVDSAGALVLEQVSDRVEALVQELGADAQVGFHGHENLGLGVANSIAAVRAGAKQIDGSTRRFGAGAGNAPVEAFVGVCDKIGVKTGIDFFAIADAAEDVVRPAMPAECLLDRQALMMGYAGVYSSFLKHAERQAERYGVSSAELLVRAGKRKLVGGQEDQLIDIALELQREHL</sequence>
<gene>
    <name type="ordered locus">ROP_44500</name>
</gene>
<feature type="chain" id="PRO_0000387899" description="4-hydroxy-2-oxovalerate aldolase 3">
    <location>
        <begin position="1"/>
        <end position="339"/>
    </location>
</feature>
<feature type="domain" description="Pyruvate carboxyltransferase" evidence="1">
    <location>
        <begin position="7"/>
        <end position="259"/>
    </location>
</feature>
<feature type="active site" description="Proton acceptor" evidence="1">
    <location>
        <position position="19"/>
    </location>
</feature>
<feature type="binding site" evidence="1">
    <location>
        <begin position="15"/>
        <end position="16"/>
    </location>
    <ligand>
        <name>substrate</name>
    </ligand>
</feature>
<feature type="binding site" evidence="1">
    <location>
        <position position="16"/>
    </location>
    <ligand>
        <name>Mn(2+)</name>
        <dbReference type="ChEBI" id="CHEBI:29035"/>
    </ligand>
</feature>
<feature type="binding site" evidence="1">
    <location>
        <position position="169"/>
    </location>
    <ligand>
        <name>substrate</name>
    </ligand>
</feature>
<feature type="binding site" evidence="1">
    <location>
        <position position="198"/>
    </location>
    <ligand>
        <name>Mn(2+)</name>
        <dbReference type="ChEBI" id="CHEBI:29035"/>
    </ligand>
</feature>
<feature type="binding site" evidence="1">
    <location>
        <position position="198"/>
    </location>
    <ligand>
        <name>substrate</name>
    </ligand>
</feature>
<feature type="binding site" evidence="1">
    <location>
        <position position="200"/>
    </location>
    <ligand>
        <name>Mn(2+)</name>
        <dbReference type="ChEBI" id="CHEBI:29035"/>
    </ligand>
</feature>
<feature type="binding site" evidence="1">
    <location>
        <position position="289"/>
    </location>
    <ligand>
        <name>substrate</name>
    </ligand>
</feature>
<feature type="site" description="Transition state stabilizer" evidence="1">
    <location>
        <position position="15"/>
    </location>
</feature>
<evidence type="ECO:0000255" key="1">
    <source>
        <dbReference type="HAMAP-Rule" id="MF_01656"/>
    </source>
</evidence>
<comment type="catalytic activity">
    <reaction evidence="1">
        <text>(S)-4-hydroxy-2-oxopentanoate = acetaldehyde + pyruvate</text>
        <dbReference type="Rhea" id="RHEA:22624"/>
        <dbReference type="ChEBI" id="CHEBI:15343"/>
        <dbReference type="ChEBI" id="CHEBI:15361"/>
        <dbReference type="ChEBI" id="CHEBI:73143"/>
        <dbReference type="EC" id="4.1.3.39"/>
    </reaction>
</comment>
<comment type="similarity">
    <text evidence="1">Belongs to the 4-hydroxy-2-oxovalerate aldolase family.</text>
</comment>
<keyword id="KW-0058">Aromatic hydrocarbons catabolism</keyword>
<keyword id="KW-0456">Lyase</keyword>
<keyword id="KW-0464">Manganese</keyword>
<keyword id="KW-0479">Metal-binding</keyword>
<organism>
    <name type="scientific">Rhodococcus opacus (strain B4)</name>
    <dbReference type="NCBI Taxonomy" id="632772"/>
    <lineage>
        <taxon>Bacteria</taxon>
        <taxon>Bacillati</taxon>
        <taxon>Actinomycetota</taxon>
        <taxon>Actinomycetes</taxon>
        <taxon>Mycobacteriales</taxon>
        <taxon>Nocardiaceae</taxon>
        <taxon>Rhodococcus</taxon>
    </lineage>
</organism>
<reference key="1">
    <citation type="submission" date="2009-03" db="EMBL/GenBank/DDBJ databases">
        <title>Comparison of the complete genome sequences of Rhodococcus erythropolis PR4 and Rhodococcus opacus B4.</title>
        <authorList>
            <person name="Takarada H."/>
            <person name="Sekine M."/>
            <person name="Hosoyama A."/>
            <person name="Yamada R."/>
            <person name="Fujisawa T."/>
            <person name="Omata S."/>
            <person name="Shimizu A."/>
            <person name="Tsukatani N."/>
            <person name="Tanikawa S."/>
            <person name="Fujita N."/>
            <person name="Harayama S."/>
        </authorList>
    </citation>
    <scope>NUCLEOTIDE SEQUENCE [LARGE SCALE GENOMIC DNA]</scope>
    <source>
        <strain>B4</strain>
    </source>
</reference>
<accession>C1BAJ4</accession>
<protein>
    <recommendedName>
        <fullName evidence="1">4-hydroxy-2-oxovalerate aldolase 3</fullName>
        <shortName evidence="1">HOA 3</shortName>
        <ecNumber evidence="1">4.1.3.39</ecNumber>
    </recommendedName>
    <alternativeName>
        <fullName evidence="1">4-hydroxy-2-keto-pentanoic acid aldolase 3</fullName>
    </alternativeName>
    <alternativeName>
        <fullName evidence="1">4-hydroxy-2-oxopentanoate aldolase 3</fullName>
    </alternativeName>
</protein>
<name>HOA3_RHOOB</name>